<dbReference type="EC" id="2.4.99.28" evidence="2"/>
<dbReference type="EC" id="3.4.16.4" evidence="2"/>
<dbReference type="EMBL" id="AF085340">
    <property type="protein sequence ID" value="AAC34128.1"/>
    <property type="molecule type" value="Genomic_DNA"/>
</dbReference>
<dbReference type="SMR" id="O86088"/>
<dbReference type="CAZy" id="GT51">
    <property type="family name" value="Glycosyltransferase Family 51"/>
</dbReference>
<dbReference type="UniPathway" id="UPA00219"/>
<dbReference type="GO" id="GO:0030288">
    <property type="term" value="C:outer membrane-bounded periplasmic space"/>
    <property type="evidence" value="ECO:0007669"/>
    <property type="project" value="TreeGrafter"/>
</dbReference>
<dbReference type="GO" id="GO:0005886">
    <property type="term" value="C:plasma membrane"/>
    <property type="evidence" value="ECO:0007669"/>
    <property type="project" value="UniProtKB-SubCell"/>
</dbReference>
<dbReference type="GO" id="GO:0008658">
    <property type="term" value="F:penicillin binding"/>
    <property type="evidence" value="ECO:0007669"/>
    <property type="project" value="InterPro"/>
</dbReference>
<dbReference type="GO" id="GO:0008955">
    <property type="term" value="F:peptidoglycan glycosyltransferase activity"/>
    <property type="evidence" value="ECO:0007669"/>
    <property type="project" value="RHEA"/>
</dbReference>
<dbReference type="GO" id="GO:0009002">
    <property type="term" value="F:serine-type D-Ala-D-Ala carboxypeptidase activity"/>
    <property type="evidence" value="ECO:0007669"/>
    <property type="project" value="UniProtKB-EC"/>
</dbReference>
<dbReference type="GO" id="GO:0071555">
    <property type="term" value="P:cell wall organization"/>
    <property type="evidence" value="ECO:0007669"/>
    <property type="project" value="UniProtKB-KW"/>
</dbReference>
<dbReference type="GO" id="GO:0009252">
    <property type="term" value="P:peptidoglycan biosynthetic process"/>
    <property type="evidence" value="ECO:0007669"/>
    <property type="project" value="UniProtKB-UniPathway"/>
</dbReference>
<dbReference type="GO" id="GO:0006508">
    <property type="term" value="P:proteolysis"/>
    <property type="evidence" value="ECO:0007669"/>
    <property type="project" value="UniProtKB-KW"/>
</dbReference>
<dbReference type="GO" id="GO:0008360">
    <property type="term" value="P:regulation of cell shape"/>
    <property type="evidence" value="ECO:0007669"/>
    <property type="project" value="UniProtKB-KW"/>
</dbReference>
<dbReference type="GO" id="GO:0046677">
    <property type="term" value="P:response to antibiotic"/>
    <property type="evidence" value="ECO:0007669"/>
    <property type="project" value="UniProtKB-KW"/>
</dbReference>
<dbReference type="FunFam" id="3.40.710.10:FF:000041">
    <property type="entry name" value="Penicillin-binding protein 1A"/>
    <property type="match status" value="1"/>
</dbReference>
<dbReference type="FunFam" id="1.10.3810.10:FF:000003">
    <property type="entry name" value="Penicillin-binding protein 1a"/>
    <property type="match status" value="1"/>
</dbReference>
<dbReference type="Gene3D" id="1.10.3810.10">
    <property type="entry name" value="Biosynthetic peptidoglycan transglycosylase-like"/>
    <property type="match status" value="1"/>
</dbReference>
<dbReference type="Gene3D" id="3.40.710.10">
    <property type="entry name" value="DD-peptidase/beta-lactamase superfamily"/>
    <property type="match status" value="2"/>
</dbReference>
<dbReference type="InterPro" id="IPR012338">
    <property type="entry name" value="Beta-lactam/transpept-like"/>
</dbReference>
<dbReference type="InterPro" id="IPR001264">
    <property type="entry name" value="Glyco_trans_51"/>
</dbReference>
<dbReference type="InterPro" id="IPR050396">
    <property type="entry name" value="Glycosyltr_51/Transpeptidase"/>
</dbReference>
<dbReference type="InterPro" id="IPR023346">
    <property type="entry name" value="Lysozyme-like_dom_sf"/>
</dbReference>
<dbReference type="InterPro" id="IPR036950">
    <property type="entry name" value="PBP_transglycosylase"/>
</dbReference>
<dbReference type="InterPro" id="IPR031376">
    <property type="entry name" value="PCB_OB"/>
</dbReference>
<dbReference type="InterPro" id="IPR001460">
    <property type="entry name" value="PCN-bd_Tpept"/>
</dbReference>
<dbReference type="NCBIfam" id="TIGR02074">
    <property type="entry name" value="PBP_1a_fam"/>
    <property type="match status" value="1"/>
</dbReference>
<dbReference type="PANTHER" id="PTHR32282">
    <property type="entry name" value="BINDING PROTEIN TRANSPEPTIDASE, PUTATIVE-RELATED"/>
    <property type="match status" value="1"/>
</dbReference>
<dbReference type="PANTHER" id="PTHR32282:SF27">
    <property type="entry name" value="PENICILLIN-BINDING PROTEIN 1A"/>
    <property type="match status" value="1"/>
</dbReference>
<dbReference type="Pfam" id="PF17092">
    <property type="entry name" value="PCB_OB"/>
    <property type="match status" value="1"/>
</dbReference>
<dbReference type="Pfam" id="PF00912">
    <property type="entry name" value="Transgly"/>
    <property type="match status" value="1"/>
</dbReference>
<dbReference type="Pfam" id="PF00905">
    <property type="entry name" value="Transpeptidase"/>
    <property type="match status" value="1"/>
</dbReference>
<dbReference type="SUPFAM" id="SSF56601">
    <property type="entry name" value="beta-lactamase/transpeptidase-like"/>
    <property type="match status" value="1"/>
</dbReference>
<dbReference type="SUPFAM" id="SSF53955">
    <property type="entry name" value="Lysozyme-like"/>
    <property type="match status" value="1"/>
</dbReference>
<organism>
    <name type="scientific">Neisseria cinerea</name>
    <dbReference type="NCBI Taxonomy" id="483"/>
    <lineage>
        <taxon>Bacteria</taxon>
        <taxon>Pseudomonadati</taxon>
        <taxon>Pseudomonadota</taxon>
        <taxon>Betaproteobacteria</taxon>
        <taxon>Neisseriales</taxon>
        <taxon>Neisseriaceae</taxon>
        <taxon>Neisseria</taxon>
    </lineage>
</organism>
<comment type="function">
    <text evidence="1">Cell wall formation. Synthesis of cross-linked peptidoglycan from the lipid intermediates. The enzyme has a penicillin-insensitive transglycosylase N-terminal domain (formation of linear glycan strands) and a penicillin-sensitive transpeptidase C-terminal domain (cross-linking of the peptide subunits).</text>
</comment>
<comment type="catalytic activity">
    <reaction evidence="2">
        <text>[GlcNAc-(1-&gt;4)-Mur2Ac(oyl-L-Ala-gamma-D-Glu-L-Lys-D-Ala-D-Ala)](n)-di-trans,octa-cis-undecaprenyl diphosphate + beta-D-GlcNAc-(1-&gt;4)-Mur2Ac(oyl-L-Ala-gamma-D-Glu-L-Lys-D-Ala-D-Ala)-di-trans,octa-cis-undecaprenyl diphosphate = [GlcNAc-(1-&gt;4)-Mur2Ac(oyl-L-Ala-gamma-D-Glu-L-Lys-D-Ala-D-Ala)](n+1)-di-trans,octa-cis-undecaprenyl diphosphate + di-trans,octa-cis-undecaprenyl diphosphate + H(+)</text>
        <dbReference type="Rhea" id="RHEA:23708"/>
        <dbReference type="Rhea" id="RHEA-COMP:9602"/>
        <dbReference type="Rhea" id="RHEA-COMP:9603"/>
        <dbReference type="ChEBI" id="CHEBI:15378"/>
        <dbReference type="ChEBI" id="CHEBI:58405"/>
        <dbReference type="ChEBI" id="CHEBI:60033"/>
        <dbReference type="ChEBI" id="CHEBI:78435"/>
        <dbReference type="EC" id="2.4.99.28"/>
    </reaction>
</comment>
<comment type="catalytic activity">
    <reaction evidence="2">
        <text>Preferential cleavage: (Ac)2-L-Lys-D-Ala-|-D-Ala. Also transpeptidation of peptidyl-alanyl moieties that are N-acyl substituents of D-alanine.</text>
        <dbReference type="EC" id="3.4.16.4"/>
    </reaction>
</comment>
<comment type="pathway">
    <text>Cell wall biogenesis; peptidoglycan biosynthesis.</text>
</comment>
<comment type="subcellular location">
    <subcellularLocation>
        <location evidence="1">Cell inner membrane</location>
        <topology evidence="1">Single-pass type II membrane protein</topology>
    </subcellularLocation>
</comment>
<comment type="similarity">
    <text evidence="6">In the N-terminal section; belongs to the glycosyltransferase 51 family.</text>
</comment>
<comment type="similarity">
    <text evidence="6">In the C-terminal section; belongs to the transpeptidase family.</text>
</comment>
<sequence length="798" mass="87843">MIKKIVTTCFGLVLGLCVFGVGLVAIAILVTYPKLPSLDSLQHYQPKMPLTIYSADGEVIGIYGEQRREFTKIGDFPEVLRNAVIAAEDKRFYQHWGVDVWGVARAVVGNIVAGGVQSGASTITQQVAKNFYLSSEKTFTRKFNEALLAYKIEQSLSKDKILELYFNQIYLGQRAYGFASAAQIYFNKDVRELTLAEVAMLAGLPKAPSAYNPIVNPERAKLRQKYILNNMLEEKMITLQQRDQALNEELHYERFVQKIDQSALYVAEMVRQELYEKYGEDAYTQGFKVYTTVRTDHQKVATEALRKALRNFDRGSSYRGAESYIDLSKGEDVEETVSQYLSGLYTVDKMVPAIVLDVTKRKNVVIQLPSGKRVTLDGRSLGFAARAVNNEKMGESRIRRGSVIRVRNNGGRWVVVQEPLLQATLVSLDAKTGAVRALVGGYDFHSKTFNRAAQAMRQPGSTFKPFIYSAALSKGMTASTMVNDAPISLPGKGANGSVWTPKNSDGRYSGYITLRQALTASKNMVSIRILMSIGVGYAHEYIQRFGFKPSELPASLSMALGTGETTPLKIAEAYSVFANGGYRVSSHVIDKIYGSDGRLRAQMQPLVAGQNAPQAIDPRNAYIMYKIMQDVVRVGTARGAAALGRSDIAGKTGTTNDNKDAWFVGFNPDVVTAVYIGFDKPKSMGRAGYGGTIAVPVWVDYMRFALKGGQGKGMKVPEGVVSSNGEYYMKERMVTDPGLVVDNSGIAAQPSRRIREDKEAGAEDVERGAADEVRQEVQETPVLPSNTGSKQPQLDSLF</sequence>
<reference key="1">
    <citation type="submission" date="1998-08" db="EMBL/GenBank/DDBJ databases">
        <title>Cloning and sequence analysis of the ponA gene encoding penicillin binding protein 1 from Neisseria cinerea.</title>
        <authorList>
            <person name="Ropp P.A."/>
            <person name="Nicholas R.A."/>
        </authorList>
    </citation>
    <scope>NUCLEOTIDE SEQUENCE [GENOMIC DNA]</scope>
    <source>
        <strain>NRL 30066</strain>
    </source>
</reference>
<accession>O86088</accession>
<proteinExistence type="inferred from homology"/>
<protein>
    <recommendedName>
        <fullName>Penicillin-binding protein 1A</fullName>
        <shortName>PBP-1a</shortName>
        <shortName>PBP1a</shortName>
    </recommendedName>
    <domain>
        <recommendedName>
            <fullName>Penicillin-insensitive transglycosylase</fullName>
            <ecNumber evidence="2">2.4.99.28</ecNumber>
        </recommendedName>
        <alternativeName>
            <fullName>Peptidoglycan TGase</fullName>
        </alternativeName>
    </domain>
    <domain>
        <recommendedName>
            <fullName>Penicillin-sensitive transpeptidase</fullName>
            <ecNumber evidence="2">3.4.16.4</ecNumber>
        </recommendedName>
        <alternativeName>
            <fullName>DD-transpeptidase</fullName>
        </alternativeName>
    </domain>
</protein>
<keyword id="KW-0046">Antibiotic resistance</keyword>
<keyword id="KW-0121">Carboxypeptidase</keyword>
<keyword id="KW-0997">Cell inner membrane</keyword>
<keyword id="KW-1003">Cell membrane</keyword>
<keyword id="KW-0133">Cell shape</keyword>
<keyword id="KW-0961">Cell wall biogenesis/degradation</keyword>
<keyword id="KW-0328">Glycosyltransferase</keyword>
<keyword id="KW-0378">Hydrolase</keyword>
<keyword id="KW-0472">Membrane</keyword>
<keyword id="KW-0511">Multifunctional enzyme</keyword>
<keyword id="KW-0573">Peptidoglycan synthesis</keyword>
<keyword id="KW-0645">Protease</keyword>
<keyword id="KW-0735">Signal-anchor</keyword>
<keyword id="KW-0808">Transferase</keyword>
<keyword id="KW-0812">Transmembrane</keyword>
<keyword id="KW-1133">Transmembrane helix</keyword>
<name>PBPA_NEICI</name>
<feature type="chain" id="PRO_0000083166" description="Penicillin-binding protein 1A">
    <location>
        <begin position="1"/>
        <end position="798"/>
    </location>
</feature>
<feature type="topological domain" description="Cytoplasmic" evidence="4">
    <location>
        <begin position="1"/>
        <end position="9"/>
    </location>
</feature>
<feature type="transmembrane region" description="Helical; Signal-anchor for type II membrane protein" evidence="4">
    <location>
        <begin position="10"/>
        <end position="30"/>
    </location>
</feature>
<feature type="topological domain" description="Periplasmic" evidence="4">
    <location>
        <begin position="31"/>
        <end position="798"/>
    </location>
</feature>
<feature type="region of interest" description="Transglycosylase">
    <location>
        <begin position="50"/>
        <end position="218"/>
    </location>
</feature>
<feature type="region of interest" description="Transpeptidase">
    <location>
        <begin position="414"/>
        <end position="700"/>
    </location>
</feature>
<feature type="region of interest" description="Disordered" evidence="5">
    <location>
        <begin position="751"/>
        <end position="798"/>
    </location>
</feature>
<feature type="compositionally biased region" description="Basic and acidic residues" evidence="5">
    <location>
        <begin position="753"/>
        <end position="777"/>
    </location>
</feature>
<feature type="compositionally biased region" description="Polar residues" evidence="5">
    <location>
        <begin position="783"/>
        <end position="798"/>
    </location>
</feature>
<feature type="active site" description="Proton donor; for transglycosylase activity" evidence="3">
    <location>
        <position position="88"/>
    </location>
</feature>
<feature type="active site" description="Acyl-ester intermediate; for transpeptidase activity" evidence="3">
    <location>
        <position position="461"/>
    </location>
</feature>
<evidence type="ECO:0000250" key="1"/>
<evidence type="ECO:0000250" key="2">
    <source>
        <dbReference type="UniProtKB" id="P02918"/>
    </source>
</evidence>
<evidence type="ECO:0000250" key="3">
    <source>
        <dbReference type="UniProtKB" id="P02919"/>
    </source>
</evidence>
<evidence type="ECO:0000255" key="4"/>
<evidence type="ECO:0000256" key="5">
    <source>
        <dbReference type="SAM" id="MobiDB-lite"/>
    </source>
</evidence>
<evidence type="ECO:0000305" key="6"/>
<gene>
    <name type="primary">mrcA</name>
    <name type="synonym">ponA</name>
</gene>